<keyword id="KW-0130">Cell adhesion</keyword>
<keyword id="KW-1003">Cell membrane</keyword>
<keyword id="KW-0966">Cell projection</keyword>
<keyword id="KW-0145">Chemotaxis</keyword>
<keyword id="KW-0175">Coiled coil</keyword>
<keyword id="KW-0963">Cytoplasm</keyword>
<keyword id="KW-0206">Cytoskeleton</keyword>
<keyword id="KW-0221">Differentiation</keyword>
<keyword id="KW-1009">Hearing</keyword>
<keyword id="KW-0472">Membrane</keyword>
<keyword id="KW-0517">Myogenesis</keyword>
<keyword id="KW-0597">Phosphoprotein</keyword>
<keyword id="KW-1185">Reference proteome</keyword>
<keyword id="KW-0734">Signal transduction inhibitor</keyword>
<sequence length="1310" mass="144709">MQHCLEQSDITQYQQYYSSWCDARALGPRLSPVALSLLVGRNEHRLSAEPEVHRSQGRCVGVEVPREDINYLSTTCKPEIKSRNLKEDSEDQGRLPTRLPEIMLVGSQSFSPGGPNGIIRSQSFAGFSGLQERRSRQVLGVSPGITRAPSKDVYCKPGYACRVEFLLCKAFSKQTCNSFIENASALKKPQAKLKKMHNLGHKNTNTPKEPQPKRVEEVYRALKNGLDEYLEFHQTELDKLTAQLKDMKRNSRLGVLYDLDKGVLYDLDKVDELYEAYCIQRRLQDGASKMKQAFATSPASKAARESLSEINRSYKEYTENMCTIEAELESLLGEFSIKMKGLAGFARLCPGDQYESMDGPNPYQRQQGEVYFSLLATRRIGDGSCLSKGARIFMKYGRQRWKLKGKIEVNGKQSWDGEETVFLPLIVGFISIKVTELKGLATHILVGSVTCETKELFAARPQVVAVDINDLGTIKLNLEITWYPFDVEDTTPSSGPGNKTAALQRRMSMYSQGTPETPTFKDQSFFSNLPDDIFESGNAAEEKRPLSLSFSDLQDGDCVFTSSSTTSPSSSHSAHPEITITPAELTHSSLSSQNEGTEDSSSASSRNSLGEDHEPKSHSKSDTVEPKKPSVDARSGTESLFLENSVAEALLQESDEASELKPVELDTFEGNITKQLVKRLTSAEGPITTNKLFFEGSVGSESEAGRSFLDGSLEDAFNGLFLALDPHKEQYKEFQDLNQEVTHLDDVLKCKPAGSRSRSSSLSLTVESALESFDFLNTSDFDEEEEDGDEVCHVGGGADSVFSDTETEKSGSVHPEARGHLSEALTEDTGVGTSVAGSPLPLTTGNESLDITIVKHLQYCTQLVQQIVFSSKTPFVARSLLEKLSRQVLVLQKLAAVSDENLGNITSVVEAIPEFHKKPSLLSFWTKCCSPSGVYHSSAAHLIKQLEASFARNINKDYPGLAEPVFRTLVSQILDRAEPLLCSGLSSEVITVFQYYSFLTSHGVSDLETHLGQLARQVAMVQTLQSLRDEKLLQTMSDLAPSNLPAQQEVLRTLALLLTKDDNEVSEAVTLYLAAASKNEHFREKALLYYCEALTKTNLQLQKAACLALKSLEATESIKMLVTLCQSDTEEIRTVASETLLSLAPYSGSAMTSQIRQNYSTEVEAAVNRLVNLHLRASYTYLSLGFFFDPDDVALEGNERGGRALFQDVQKPSQDEWGKTLEAMEAALALEKNLNQALLDLHALGSARTDPHLCDFLESHFLDKEVKLIKKMGNHLTNLRRVAGPQPAQTGVAQASLGEYLFERLTLKHD</sequence>
<comment type="function">
    <text evidence="1 2">Acts as an inhibitor of the small GTPase RHOA and plays several roles in the regulation of myoblast and hair cell differentiation, lymphocyte T proliferation and neutrophil polarization. Plays a role in fetal mononuclear myoblast differentiation by promoting filopodia and myotube formation (By similarity). Maintains naive T lymphocytes in a quiescent state and prevents chemokine-induced T lymphocyte responses, such as cell adhesion, polarization and migration (By similarity). Involved also in the regulation of neutrophil polarization, chemotaxis and adhesion. Required for normal development of inner and outer hair cell stereocilia within the cochlea of the inner ear. Plays a role for maintaining the structural organization of the basal domain of stereocilia. Involved in mechanosensory hair cell function. Required for normal hearing (By similarity).</text>
</comment>
<comment type="subunit">
    <text evidence="1 2">Homooligomer; homooligomerization is regulated by RHOC and leads to the formation of concatemers through the association of N- and C-termini (By similarity). Interacts (phosphorylated form) with 14-3-3 proteins; these interactions occur during myogenic cell differentiation and also induces T cell proliferation arrest (By similarity). Interacts (phosphorylated form) with HDAC6; this interaction occurs during early myogenic differentiation, prevents HDAC6 to deacetylate tubulin and also induces T cell proliferation arrest (By similarity). Interacts with DYSF; this interaction occurs during early myogenic differentiation (By similarity). Interacts with MYOF (By similarity). Interacts (via active GTP- or inactive GDP-bound forms) with RHOA; this interaction is direct, blocks the loading of GTP to RHOA and decreases upon chemokine CCL19 stimulation in primary T lymphocytes. Interacts with RHOC (By similarity). Interacts (via phosphorylated form) with YWHAB; this interaction occurs in a chemokine-dependent manner and does not compete for binding of RIPOR2 with RHOA nor blocks inhibition of RIPOR2-mediated RHOA activity (By similarity). Interacts with YWHAE (By similarity). Interacts with YWHAQ (By similarity).</text>
</comment>
<comment type="subcellular location">
    <subcellularLocation>
        <location evidence="2">Cytoplasm</location>
    </subcellularLocation>
    <subcellularLocation>
        <location evidence="2">Cytoplasm</location>
        <location evidence="2">Cytoskeleton</location>
    </subcellularLocation>
    <subcellularLocation>
        <location evidence="2">Cell projection</location>
        <location evidence="2">Filopodium</location>
    </subcellularLocation>
    <subcellularLocation>
        <location evidence="5">Apical cell membrane</location>
    </subcellularLocation>
    <subcellularLocation>
        <location evidence="1">Cell projection</location>
        <location evidence="1">Stereocilium</location>
    </subcellularLocation>
    <subcellularLocation>
        <location evidence="5">Cell projection</location>
        <location evidence="5">Stereocilium membrane</location>
    </subcellularLocation>
    <text evidence="1 2 5">Localized in the cytoplasm in cells undergoing mitosis (By similarity). Colocalized with F-actin. Accumulates at the leading edge of polarized neutrophils in a chemokine-dependent manner. Localized with RHOC within the basal domain of hair cell stereocilia, near the taper region. Detected in punctate pattern forming a circumferential ring at the stereocilia base (By similarity). Localized to the apical stereocilia of inner and outer hair cells (PubMed:24958875).</text>
</comment>
<comment type="tissue specificity">
    <text evidence="5">Expressed in the cochlea (at protein level).</text>
</comment>
<comment type="PTM">
    <text evidence="2">Phosphorylated. Chemokine-induced phosphorylation in neutrophils occurs in a PKC- and AKT-dependent manner, resulting in RIPOR2 interaction with YWHAB and stabilization. Phosphorylated by PKCA, AKT1 and MAPKAPK1A; in vitro.</text>
</comment>
<comment type="similarity">
    <text evidence="6">Belongs to the RIPOR family.</text>
</comment>
<reference key="1">
    <citation type="submission" date="2003-06" db="EMBL/GenBank/DDBJ databases">
        <title>Liver regeneration after PH.</title>
        <authorList>
            <person name="Xu C.S."/>
            <person name="Li W.Q."/>
            <person name="Li Y.C."/>
            <person name="Ma H."/>
            <person name="Wang L."/>
            <person name="Wang S.F."/>
            <person name="Han H.P."/>
            <person name="Wang G.P."/>
            <person name="Chai L.Q."/>
            <person name="Yuan J.Y."/>
            <person name="Yang K.J."/>
            <person name="Yan H.M."/>
            <person name="Chang C.F."/>
            <person name="Zhao L.F."/>
            <person name="Shi J.B."/>
            <person name="Rahman S."/>
            <person name="Wang Q.N."/>
            <person name="Zhang J.B."/>
        </authorList>
    </citation>
    <scope>NUCLEOTIDE SEQUENCE [LARGE SCALE MRNA]</scope>
</reference>
<reference key="2">
    <citation type="journal article" date="2004" name="Nature">
        <title>Genome sequence of the Brown Norway rat yields insights into mammalian evolution.</title>
        <authorList>
            <person name="Gibbs R.A."/>
            <person name="Weinstock G.M."/>
            <person name="Metzker M.L."/>
            <person name="Muzny D.M."/>
            <person name="Sodergren E.J."/>
            <person name="Scherer S."/>
            <person name="Scott G."/>
            <person name="Steffen D."/>
            <person name="Worley K.C."/>
            <person name="Burch P.E."/>
            <person name="Okwuonu G."/>
            <person name="Hines S."/>
            <person name="Lewis L."/>
            <person name="Deramo C."/>
            <person name="Delgado O."/>
            <person name="Dugan-Rocha S."/>
            <person name="Miner G."/>
            <person name="Morgan M."/>
            <person name="Hawes A."/>
            <person name="Gill R."/>
            <person name="Holt R.A."/>
            <person name="Adams M.D."/>
            <person name="Amanatides P.G."/>
            <person name="Baden-Tillson H."/>
            <person name="Barnstead M."/>
            <person name="Chin S."/>
            <person name="Evans C.A."/>
            <person name="Ferriera S."/>
            <person name="Fosler C."/>
            <person name="Glodek A."/>
            <person name="Gu Z."/>
            <person name="Jennings D."/>
            <person name="Kraft C.L."/>
            <person name="Nguyen T."/>
            <person name="Pfannkoch C.M."/>
            <person name="Sitter C."/>
            <person name="Sutton G.G."/>
            <person name="Venter J.C."/>
            <person name="Woodage T."/>
            <person name="Smith D."/>
            <person name="Lee H.-M."/>
            <person name="Gustafson E."/>
            <person name="Cahill P."/>
            <person name="Kana A."/>
            <person name="Doucette-Stamm L."/>
            <person name="Weinstock K."/>
            <person name="Fechtel K."/>
            <person name="Weiss R.B."/>
            <person name="Dunn D.M."/>
            <person name="Green E.D."/>
            <person name="Blakesley R.W."/>
            <person name="Bouffard G.G."/>
            <person name="De Jong P.J."/>
            <person name="Osoegawa K."/>
            <person name="Zhu B."/>
            <person name="Marra M."/>
            <person name="Schein J."/>
            <person name="Bosdet I."/>
            <person name="Fjell C."/>
            <person name="Jones S."/>
            <person name="Krzywinski M."/>
            <person name="Mathewson C."/>
            <person name="Siddiqui A."/>
            <person name="Wye N."/>
            <person name="McPherson J."/>
            <person name="Zhao S."/>
            <person name="Fraser C.M."/>
            <person name="Shetty J."/>
            <person name="Shatsman S."/>
            <person name="Geer K."/>
            <person name="Chen Y."/>
            <person name="Abramzon S."/>
            <person name="Nierman W.C."/>
            <person name="Havlak P.H."/>
            <person name="Chen R."/>
            <person name="Durbin K.J."/>
            <person name="Egan A."/>
            <person name="Ren Y."/>
            <person name="Song X.-Z."/>
            <person name="Li B."/>
            <person name="Liu Y."/>
            <person name="Qin X."/>
            <person name="Cawley S."/>
            <person name="Cooney A.J."/>
            <person name="D'Souza L.M."/>
            <person name="Martin K."/>
            <person name="Wu J.Q."/>
            <person name="Gonzalez-Garay M.L."/>
            <person name="Jackson A.R."/>
            <person name="Kalafus K.J."/>
            <person name="McLeod M.P."/>
            <person name="Milosavljevic A."/>
            <person name="Virk D."/>
            <person name="Volkov A."/>
            <person name="Wheeler D.A."/>
            <person name="Zhang Z."/>
            <person name="Bailey J.A."/>
            <person name="Eichler E.E."/>
            <person name="Tuzun E."/>
            <person name="Birney E."/>
            <person name="Mongin E."/>
            <person name="Ureta-Vidal A."/>
            <person name="Woodwark C."/>
            <person name="Zdobnov E."/>
            <person name="Bork P."/>
            <person name="Suyama M."/>
            <person name="Torrents D."/>
            <person name="Alexandersson M."/>
            <person name="Trask B.J."/>
            <person name="Young J.M."/>
            <person name="Huang H."/>
            <person name="Wang H."/>
            <person name="Xing H."/>
            <person name="Daniels S."/>
            <person name="Gietzen D."/>
            <person name="Schmidt J."/>
            <person name="Stevens K."/>
            <person name="Vitt U."/>
            <person name="Wingrove J."/>
            <person name="Camara F."/>
            <person name="Mar Alba M."/>
            <person name="Abril J.F."/>
            <person name="Guigo R."/>
            <person name="Smit A."/>
            <person name="Dubchak I."/>
            <person name="Rubin E.M."/>
            <person name="Couronne O."/>
            <person name="Poliakov A."/>
            <person name="Huebner N."/>
            <person name="Ganten D."/>
            <person name="Goesele C."/>
            <person name="Hummel O."/>
            <person name="Kreitler T."/>
            <person name="Lee Y.-A."/>
            <person name="Monti J."/>
            <person name="Schulz H."/>
            <person name="Zimdahl H."/>
            <person name="Himmelbauer H."/>
            <person name="Lehrach H."/>
            <person name="Jacob H.J."/>
            <person name="Bromberg S."/>
            <person name="Gullings-Handley J."/>
            <person name="Jensen-Seaman M.I."/>
            <person name="Kwitek A.E."/>
            <person name="Lazar J."/>
            <person name="Pasko D."/>
            <person name="Tonellato P.J."/>
            <person name="Twigger S."/>
            <person name="Ponting C.P."/>
            <person name="Duarte J.M."/>
            <person name="Rice S."/>
            <person name="Goodstadt L."/>
            <person name="Beatson S.A."/>
            <person name="Emes R.D."/>
            <person name="Winter E.E."/>
            <person name="Webber C."/>
            <person name="Brandt P."/>
            <person name="Nyakatura G."/>
            <person name="Adetobi M."/>
            <person name="Chiaromonte F."/>
            <person name="Elnitski L."/>
            <person name="Eswara P."/>
            <person name="Hardison R.C."/>
            <person name="Hou M."/>
            <person name="Kolbe D."/>
            <person name="Makova K."/>
            <person name="Miller W."/>
            <person name="Nekrutenko A."/>
            <person name="Riemer C."/>
            <person name="Schwartz S."/>
            <person name="Taylor J."/>
            <person name="Yang S."/>
            <person name="Zhang Y."/>
            <person name="Lindpaintner K."/>
            <person name="Andrews T.D."/>
            <person name="Caccamo M."/>
            <person name="Clamp M."/>
            <person name="Clarke L."/>
            <person name="Curwen V."/>
            <person name="Durbin R.M."/>
            <person name="Eyras E."/>
            <person name="Searle S.M."/>
            <person name="Cooper G.M."/>
            <person name="Batzoglou S."/>
            <person name="Brudno M."/>
            <person name="Sidow A."/>
            <person name="Stone E.A."/>
            <person name="Payseur B.A."/>
            <person name="Bourque G."/>
            <person name="Lopez-Otin C."/>
            <person name="Puente X.S."/>
            <person name="Chakrabarti K."/>
            <person name="Chatterji S."/>
            <person name="Dewey C."/>
            <person name="Pachter L."/>
            <person name="Bray N."/>
            <person name="Yap V.B."/>
            <person name="Caspi A."/>
            <person name="Tesler G."/>
            <person name="Pevzner P.A."/>
            <person name="Haussler D."/>
            <person name="Roskin K.M."/>
            <person name="Baertsch R."/>
            <person name="Clawson H."/>
            <person name="Furey T.S."/>
            <person name="Hinrichs A.S."/>
            <person name="Karolchik D."/>
            <person name="Kent W.J."/>
            <person name="Rosenbloom K.R."/>
            <person name="Trumbower H."/>
            <person name="Weirauch M."/>
            <person name="Cooper D.N."/>
            <person name="Stenson P.D."/>
            <person name="Ma B."/>
            <person name="Brent M."/>
            <person name="Arumugam M."/>
            <person name="Shteynberg D."/>
            <person name="Copley R.R."/>
            <person name="Taylor M.S."/>
            <person name="Riethman H."/>
            <person name="Mudunuri U."/>
            <person name="Peterson J."/>
            <person name="Guyer M."/>
            <person name="Felsenfeld A."/>
            <person name="Old S."/>
            <person name="Mockrin S."/>
            <person name="Collins F.S."/>
        </authorList>
    </citation>
    <scope>NUCLEOTIDE SEQUENCE [LARGE SCALE GENOMIC DNA]</scope>
    <source>
        <strain>Brown Norway</strain>
    </source>
</reference>
<reference key="3">
    <citation type="journal article" date="2012" name="Nat. Commun.">
        <title>Quantitative maps of protein phosphorylation sites across 14 different rat organs and tissues.</title>
        <authorList>
            <person name="Lundby A."/>
            <person name="Secher A."/>
            <person name="Lage K."/>
            <person name="Nordsborg N.B."/>
            <person name="Dmytriyev A."/>
            <person name="Lundby C."/>
            <person name="Olsen J.V."/>
        </authorList>
    </citation>
    <scope>PHOSPHORYLATION [LARGE SCALE ANALYSIS] AT SER-682</scope>
    <scope>IDENTIFICATION BY MASS SPECTROMETRY [LARGE SCALE ANALYSIS]</scope>
</reference>
<reference key="4">
    <citation type="journal article" date="2014" name="Proc. Natl. Acad. Sci. U.S.A.">
        <title>FAM65B is a membrane-associated protein of hair cell stereocilia required for hearing.</title>
        <authorList>
            <person name="Diaz-Horta O."/>
            <person name="Subasioglu-Uzak A."/>
            <person name="Grati M."/>
            <person name="DeSmidt A."/>
            <person name="Foster J."/>
            <person name="Cao L."/>
            <person name="Bademci G."/>
            <person name="Tokgoz-Yilmaz S."/>
            <person name="Duman D."/>
            <person name="Cengiz F.B."/>
            <person name="Abad C."/>
            <person name="Mittal R."/>
            <person name="Blanton S."/>
            <person name="Liu X.Z."/>
            <person name="Farooq A."/>
            <person name="Walz K."/>
            <person name="Lu Z."/>
            <person name="Tekin M."/>
        </authorList>
    </citation>
    <scope>SUBCELLULAR LOCATION</scope>
    <scope>TISSUE SPECIFICITY</scope>
</reference>
<name>RIPR2_RAT</name>
<accession>Q7TP54</accession>
<organism>
    <name type="scientific">Rattus norvegicus</name>
    <name type="common">Rat</name>
    <dbReference type="NCBI Taxonomy" id="10116"/>
    <lineage>
        <taxon>Eukaryota</taxon>
        <taxon>Metazoa</taxon>
        <taxon>Chordata</taxon>
        <taxon>Craniata</taxon>
        <taxon>Vertebrata</taxon>
        <taxon>Euteleostomi</taxon>
        <taxon>Mammalia</taxon>
        <taxon>Eutheria</taxon>
        <taxon>Euarchontoglires</taxon>
        <taxon>Glires</taxon>
        <taxon>Rodentia</taxon>
        <taxon>Myomorpha</taxon>
        <taxon>Muroidea</taxon>
        <taxon>Muridae</taxon>
        <taxon>Murinae</taxon>
        <taxon>Rattus</taxon>
    </lineage>
</organism>
<dbReference type="EMBL" id="AABR06091621">
    <property type="status" value="NOT_ANNOTATED_CDS"/>
    <property type="molecule type" value="Genomic_DNA"/>
</dbReference>
<dbReference type="EMBL" id="AY325194">
    <property type="protein sequence ID" value="AAP92595.1"/>
    <property type="molecule type" value="mRNA"/>
</dbReference>
<dbReference type="RefSeq" id="NP_001014031.2">
    <property type="nucleotide sequence ID" value="NM_001014009.3"/>
</dbReference>
<dbReference type="SMR" id="Q7TP54"/>
<dbReference type="FunCoup" id="Q7TP54">
    <property type="interactions" value="746"/>
</dbReference>
<dbReference type="IntAct" id="Q7TP54">
    <property type="interactions" value="2"/>
</dbReference>
<dbReference type="MINT" id="Q7TP54"/>
<dbReference type="STRING" id="10116.ENSRNOP00000048390"/>
<dbReference type="iPTMnet" id="Q7TP54"/>
<dbReference type="PhosphoSitePlus" id="Q7TP54"/>
<dbReference type="jPOST" id="Q7TP54"/>
<dbReference type="PaxDb" id="10116-ENSRNOP00000048390"/>
<dbReference type="Ensembl" id="ENSRNOT00000048298.2">
    <property type="protein sequence ID" value="ENSRNOP00000048390.1"/>
    <property type="gene ID" value="ENSRNOG00000018804.7"/>
</dbReference>
<dbReference type="GeneID" id="306934"/>
<dbReference type="KEGG" id="rno:306934"/>
<dbReference type="UCSC" id="RGD:1306939">
    <property type="organism name" value="rat"/>
</dbReference>
<dbReference type="AGR" id="RGD:1306939"/>
<dbReference type="CTD" id="9750"/>
<dbReference type="RGD" id="1306939">
    <property type="gene designation" value="Ripor2"/>
</dbReference>
<dbReference type="eggNOG" id="KOG2332">
    <property type="taxonomic scope" value="Eukaryota"/>
</dbReference>
<dbReference type="GeneTree" id="ENSGT00940000153717"/>
<dbReference type="HOGENOM" id="CLU_006211_0_0_1"/>
<dbReference type="InParanoid" id="Q7TP54"/>
<dbReference type="OrthoDB" id="57446at9989"/>
<dbReference type="PhylomeDB" id="Q7TP54"/>
<dbReference type="TreeFam" id="TF329332"/>
<dbReference type="PRO" id="PR:Q7TP54"/>
<dbReference type="Proteomes" id="UP000002494">
    <property type="component" value="Chromosome 17"/>
</dbReference>
<dbReference type="Bgee" id="ENSRNOG00000018804">
    <property type="expression patterns" value="Expressed in spleen and 19 other cell types or tissues"/>
</dbReference>
<dbReference type="GO" id="GO:0016324">
    <property type="term" value="C:apical plasma membrane"/>
    <property type="evidence" value="ECO:0000314"/>
    <property type="project" value="MGI"/>
</dbReference>
<dbReference type="GO" id="GO:0005737">
    <property type="term" value="C:cytoplasm"/>
    <property type="evidence" value="ECO:0000250"/>
    <property type="project" value="UniProtKB"/>
</dbReference>
<dbReference type="GO" id="GO:0005856">
    <property type="term" value="C:cytoskeleton"/>
    <property type="evidence" value="ECO:0000250"/>
    <property type="project" value="UniProtKB"/>
</dbReference>
<dbReference type="GO" id="GO:0005829">
    <property type="term" value="C:cytosol"/>
    <property type="evidence" value="ECO:0007669"/>
    <property type="project" value="Ensembl"/>
</dbReference>
<dbReference type="GO" id="GO:0030175">
    <property type="term" value="C:filopodium"/>
    <property type="evidence" value="ECO:0000250"/>
    <property type="project" value="UniProtKB"/>
</dbReference>
<dbReference type="GO" id="GO:0032420">
    <property type="term" value="C:stereocilium"/>
    <property type="evidence" value="ECO:0000314"/>
    <property type="project" value="UniProtKB"/>
</dbReference>
<dbReference type="GO" id="GO:0060171">
    <property type="term" value="C:stereocilium membrane"/>
    <property type="evidence" value="ECO:0000314"/>
    <property type="project" value="MGI"/>
</dbReference>
<dbReference type="GO" id="GO:0071889">
    <property type="term" value="F:14-3-3 protein binding"/>
    <property type="evidence" value="ECO:0000250"/>
    <property type="project" value="UniProtKB"/>
</dbReference>
<dbReference type="GO" id="GO:0008199">
    <property type="term" value="F:ferric iron binding"/>
    <property type="evidence" value="ECO:0007669"/>
    <property type="project" value="InterPro"/>
</dbReference>
<dbReference type="GO" id="GO:0042802">
    <property type="term" value="F:identical protein binding"/>
    <property type="evidence" value="ECO:0000266"/>
    <property type="project" value="RGD"/>
</dbReference>
<dbReference type="GO" id="GO:0060088">
    <property type="term" value="P:auditory receptor cell stereocilium organization"/>
    <property type="evidence" value="ECO:0000266"/>
    <property type="project" value="RGD"/>
</dbReference>
<dbReference type="GO" id="GO:0007155">
    <property type="term" value="P:cell adhesion"/>
    <property type="evidence" value="ECO:0007669"/>
    <property type="project" value="UniProtKB-KW"/>
</dbReference>
<dbReference type="GO" id="GO:1990869">
    <property type="term" value="P:cellular response to chemokine"/>
    <property type="evidence" value="ECO:0000250"/>
    <property type="project" value="UniProtKB"/>
</dbReference>
<dbReference type="GO" id="GO:0071260">
    <property type="term" value="P:cellular response to mechanical stimulus"/>
    <property type="evidence" value="ECO:0000266"/>
    <property type="project" value="RGD"/>
</dbReference>
<dbReference type="GO" id="GO:0006935">
    <property type="term" value="P:chemotaxis"/>
    <property type="evidence" value="ECO:0007669"/>
    <property type="project" value="UniProtKB-KW"/>
</dbReference>
<dbReference type="GO" id="GO:0045184">
    <property type="term" value="P:establishment of protein localization"/>
    <property type="evidence" value="ECO:0000266"/>
    <property type="project" value="RGD"/>
</dbReference>
<dbReference type="GO" id="GO:0007517">
    <property type="term" value="P:muscle organ development"/>
    <property type="evidence" value="ECO:0007669"/>
    <property type="project" value="UniProtKB-KW"/>
</dbReference>
<dbReference type="GO" id="GO:0007162">
    <property type="term" value="P:negative regulation of cell adhesion"/>
    <property type="evidence" value="ECO:0000250"/>
    <property type="project" value="UniProtKB"/>
</dbReference>
<dbReference type="GO" id="GO:1903904">
    <property type="term" value="P:negative regulation of establishment of T cell polarity"/>
    <property type="evidence" value="ECO:0000250"/>
    <property type="project" value="UniProtKB"/>
</dbReference>
<dbReference type="GO" id="GO:1905872">
    <property type="term" value="P:negative regulation of protein localization to cell leading edge"/>
    <property type="evidence" value="ECO:0000250"/>
    <property type="project" value="UniProtKB"/>
</dbReference>
<dbReference type="GO" id="GO:2001107">
    <property type="term" value="P:negative regulation of Rho guanyl-nucleotide exchange factor activity"/>
    <property type="evidence" value="ECO:0000250"/>
    <property type="project" value="UniProtKB"/>
</dbReference>
<dbReference type="GO" id="GO:0035024">
    <property type="term" value="P:negative regulation of Rho protein signal transduction"/>
    <property type="evidence" value="ECO:0000250"/>
    <property type="project" value="UniProtKB"/>
</dbReference>
<dbReference type="GO" id="GO:2000405">
    <property type="term" value="P:negative regulation of T cell migration"/>
    <property type="evidence" value="ECO:0000250"/>
    <property type="project" value="UniProtKB"/>
</dbReference>
<dbReference type="GO" id="GO:0051491">
    <property type="term" value="P:positive regulation of filopodium assembly"/>
    <property type="evidence" value="ECO:0000250"/>
    <property type="project" value="UniProtKB"/>
</dbReference>
<dbReference type="GO" id="GO:0045663">
    <property type="term" value="P:positive regulation of myoblast differentiation"/>
    <property type="evidence" value="ECO:0000250"/>
    <property type="project" value="UniProtKB"/>
</dbReference>
<dbReference type="GO" id="GO:1901741">
    <property type="term" value="P:positive regulation of myoblast fusion"/>
    <property type="evidence" value="ECO:0000250"/>
    <property type="project" value="UniProtKB"/>
</dbReference>
<dbReference type="GO" id="GO:0090023">
    <property type="term" value="P:positive regulation of neutrophil chemotaxis"/>
    <property type="evidence" value="ECO:0000250"/>
    <property type="project" value="UniProtKB"/>
</dbReference>
<dbReference type="GO" id="GO:2000391">
    <property type="term" value="P:positive regulation of neutrophil extravasation"/>
    <property type="evidence" value="ECO:0000250"/>
    <property type="project" value="UniProtKB"/>
</dbReference>
<dbReference type="GO" id="GO:0051260">
    <property type="term" value="P:protein homooligomerization"/>
    <property type="evidence" value="ECO:0000266"/>
    <property type="project" value="RGD"/>
</dbReference>
<dbReference type="GO" id="GO:2000114">
    <property type="term" value="P:regulation of establishment of cell polarity"/>
    <property type="evidence" value="ECO:0000250"/>
    <property type="project" value="UniProtKB"/>
</dbReference>
<dbReference type="GO" id="GO:0007605">
    <property type="term" value="P:sensory perception of sound"/>
    <property type="evidence" value="ECO:0000250"/>
    <property type="project" value="UniProtKB"/>
</dbReference>
<dbReference type="FunFam" id="1.25.10.10:FF:000191">
    <property type="entry name" value="RHO family interacting cell polarization regulator 2"/>
    <property type="match status" value="1"/>
</dbReference>
<dbReference type="Gene3D" id="1.20.1260.10">
    <property type="match status" value="2"/>
</dbReference>
<dbReference type="Gene3D" id="1.25.10.10">
    <property type="entry name" value="Leucine-rich Repeat Variant"/>
    <property type="match status" value="1"/>
</dbReference>
<dbReference type="InterPro" id="IPR011989">
    <property type="entry name" value="ARM-like"/>
</dbReference>
<dbReference type="InterPro" id="IPR016024">
    <property type="entry name" value="ARM-type_fold"/>
</dbReference>
<dbReference type="InterPro" id="IPR031780">
    <property type="entry name" value="FAM65_N"/>
</dbReference>
<dbReference type="InterPro" id="IPR012347">
    <property type="entry name" value="Ferritin-like"/>
</dbReference>
<dbReference type="InterPro" id="IPR009040">
    <property type="entry name" value="Ferritin-like_diiron"/>
</dbReference>
<dbReference type="InterPro" id="IPR009078">
    <property type="entry name" value="Ferritin-like_SF"/>
</dbReference>
<dbReference type="InterPro" id="IPR014034">
    <property type="entry name" value="Ferritin_CS"/>
</dbReference>
<dbReference type="InterPro" id="IPR008331">
    <property type="entry name" value="Ferritin_DPS_dom"/>
</dbReference>
<dbReference type="InterPro" id="IPR026136">
    <property type="entry name" value="RIPOR3"/>
</dbReference>
<dbReference type="PANTHER" id="PTHR15829">
    <property type="entry name" value="PROTEIN KINASE PKN/PRK1, EFFECTOR"/>
    <property type="match status" value="1"/>
</dbReference>
<dbReference type="PANTHER" id="PTHR15829:SF2">
    <property type="entry name" value="RHO FAMILY-INTERACTING CELL POLARIZATION REGULATOR 2"/>
    <property type="match status" value="1"/>
</dbReference>
<dbReference type="Pfam" id="PF00210">
    <property type="entry name" value="Ferritin"/>
    <property type="match status" value="1"/>
</dbReference>
<dbReference type="Pfam" id="PF15903">
    <property type="entry name" value="PL48"/>
    <property type="match status" value="2"/>
</dbReference>
<dbReference type="SUPFAM" id="SSF48371">
    <property type="entry name" value="ARM repeat"/>
    <property type="match status" value="1"/>
</dbReference>
<dbReference type="SUPFAM" id="SSF47240">
    <property type="entry name" value="Ferritin-like"/>
    <property type="match status" value="1"/>
</dbReference>
<dbReference type="PROSITE" id="PS00204">
    <property type="entry name" value="FERRITIN_2"/>
    <property type="match status" value="1"/>
</dbReference>
<dbReference type="PROSITE" id="PS50905">
    <property type="entry name" value="FERRITIN_LIKE"/>
    <property type="match status" value="1"/>
</dbReference>
<feature type="chain" id="PRO_0000431658" description="Rho family-interacting cell polarization regulator 2">
    <location>
        <begin position="1"/>
        <end position="1310"/>
    </location>
</feature>
<feature type="region of interest" description="Involved in cell filopodia formation" evidence="2">
    <location>
        <begin position="196"/>
        <end position="254"/>
    </location>
</feature>
<feature type="region of interest" description="Disordered" evidence="4">
    <location>
        <begin position="588"/>
        <end position="639"/>
    </location>
</feature>
<feature type="coiled-coil region" evidence="3">
    <location>
        <begin position="224"/>
        <end position="253"/>
    </location>
</feature>
<feature type="compositionally biased region" description="Polar residues" evidence="4">
    <location>
        <begin position="588"/>
        <end position="608"/>
    </location>
</feature>
<feature type="compositionally biased region" description="Basic and acidic residues" evidence="4">
    <location>
        <begin position="609"/>
        <end position="631"/>
    </location>
</feature>
<feature type="modified residue" description="Phosphoserine" evidence="2">
    <location>
        <position position="123"/>
    </location>
</feature>
<feature type="modified residue" description="Phosphoserine" evidence="2">
    <location>
        <position position="178"/>
    </location>
</feature>
<feature type="modified residue" description="Phosphoserine" evidence="2">
    <location>
        <position position="508"/>
    </location>
</feature>
<feature type="modified residue" description="Phosphoserine" evidence="8">
    <location>
        <position position="682"/>
    </location>
</feature>
<proteinExistence type="evidence at protein level"/>
<protein>
    <recommendedName>
        <fullName evidence="7">Rho family-interacting cell polarization regulator 2</fullName>
    </recommendedName>
</protein>
<gene>
    <name evidence="7" type="primary">Ripor2</name>
    <name type="synonym">Fam65b</name>
</gene>
<evidence type="ECO:0000250" key="1">
    <source>
        <dbReference type="UniProtKB" id="Q80U16"/>
    </source>
</evidence>
<evidence type="ECO:0000250" key="2">
    <source>
        <dbReference type="UniProtKB" id="Q9Y4F9"/>
    </source>
</evidence>
<evidence type="ECO:0000255" key="3"/>
<evidence type="ECO:0000256" key="4">
    <source>
        <dbReference type="SAM" id="MobiDB-lite"/>
    </source>
</evidence>
<evidence type="ECO:0000269" key="5">
    <source>
    </source>
</evidence>
<evidence type="ECO:0000305" key="6"/>
<evidence type="ECO:0000312" key="7">
    <source>
        <dbReference type="RGD" id="1306939"/>
    </source>
</evidence>
<evidence type="ECO:0007744" key="8">
    <source>
    </source>
</evidence>